<reference key="1">
    <citation type="journal article" date="2006" name="Proc. Natl. Acad. Sci. U.S.A.">
        <title>The partitioned Rhizobium etli genome: genetic and metabolic redundancy in seven interacting replicons.</title>
        <authorList>
            <person name="Gonzalez V."/>
            <person name="Santamaria R.I."/>
            <person name="Bustos P."/>
            <person name="Hernandez-Gonzalez I."/>
            <person name="Medrano-Soto A."/>
            <person name="Moreno-Hagelsieb G."/>
            <person name="Janga S.C."/>
            <person name="Ramirez M.A."/>
            <person name="Jimenez-Jacinto V."/>
            <person name="Collado-Vides J."/>
            <person name="Davila G."/>
        </authorList>
    </citation>
    <scope>NUCLEOTIDE SEQUENCE [LARGE SCALE GENOMIC DNA]</scope>
    <source>
        <strain>ATCC 51251 / DSM 11541 / JCM 21823 / NBRC 15573 / CFN 42</strain>
    </source>
</reference>
<reference key="2">
    <citation type="journal article" date="2014" name="Elife">
        <title>Prediction and characterization of enzymatic activities guided by sequence similarity and genome neighborhood networks.</title>
        <authorList>
            <person name="Zhao S."/>
            <person name="Sakai A."/>
            <person name="Zhang X."/>
            <person name="Vetting M.W."/>
            <person name="Kumar R."/>
            <person name="Hillerich B."/>
            <person name="San Francisco B."/>
            <person name="Solbiati J."/>
            <person name="Steves A."/>
            <person name="Brown S."/>
            <person name="Akiva E."/>
            <person name="Barber A."/>
            <person name="Seidel R.D."/>
            <person name="Babbitt P.C."/>
            <person name="Almo S.C."/>
            <person name="Gerlt J.A."/>
            <person name="Jacobson M.P."/>
        </authorList>
    </citation>
    <scope>FUNCTION</scope>
    <scope>CATALYTIC ACTIVITY</scope>
    <scope>BIOPHYSICOCHEMICAL PROPERTIES</scope>
</reference>
<organism>
    <name type="scientific">Rhizobium etli (strain ATCC 51251 / DSM 11541 / JCM 21823 / NBRC 15573 / CFN 42)</name>
    <dbReference type="NCBI Taxonomy" id="347834"/>
    <lineage>
        <taxon>Bacteria</taxon>
        <taxon>Pseudomonadati</taxon>
        <taxon>Pseudomonadota</taxon>
        <taxon>Alphaproteobacteria</taxon>
        <taxon>Hyphomicrobiales</taxon>
        <taxon>Rhizobiaceae</taxon>
        <taxon>Rhizobium/Agrobacterium group</taxon>
        <taxon>Rhizobium</taxon>
    </lineage>
</organism>
<sequence length="345" mass="36758">MRWKRTIQLLDVHAEGEIGRVAIGGVPKIPGETIAAQLHWLNTDPKGDELRRFLCLEPRGAPIGSVNLLLPARHPDADAAFIILQPDQAHASSGSNSICVTTALLESGIVEMQEPETIVTLETAAGLVKATATCRDGRCEKVKLTMVPSFVHELDVEIDTPHWGKIKADLCYGGIFYALVDVGQINLTIEKANAAGLVQAGMILKELINRDIKVVHPEIPAISGVAYVMFRDTEADGTVRTCTTMWPGRADRSPCGTGNSANLATLHARGKAKVGDVFTSKSIIGSEFEVGLQAVTEVAGRPAVIPTITGRGFTFGLTQVALDPFDPHPGGFALTDVWGPSAGEI</sequence>
<accession>Q2KD13</accession>
<evidence type="ECO:0000250" key="1">
    <source>
        <dbReference type="UniProtKB" id="B9JQV3"/>
    </source>
</evidence>
<evidence type="ECO:0000269" key="2">
    <source>
    </source>
</evidence>
<evidence type="ECO:0000303" key="3">
    <source>
    </source>
</evidence>
<evidence type="ECO:0000305" key="4"/>
<evidence type="ECO:0000312" key="5">
    <source>
        <dbReference type="EMBL" id="ABC89273.1"/>
    </source>
</evidence>
<feature type="chain" id="PRO_0000432265" description="4-hydroxyproline 2-epimerase">
    <location>
        <begin position="1"/>
        <end position="345"/>
    </location>
</feature>
<feature type="active site" description="Proton acceptor" evidence="1">
    <location>
        <position position="93"/>
    </location>
</feature>
<feature type="active site" description="Proton donor" evidence="1">
    <location>
        <position position="255"/>
    </location>
</feature>
<feature type="binding site" evidence="1">
    <location>
        <position position="85"/>
    </location>
    <ligand>
        <name>substrate</name>
    </ligand>
</feature>
<feature type="binding site" evidence="1">
    <location>
        <begin position="94"/>
        <end position="95"/>
    </location>
    <ligand>
        <name>substrate</name>
    </ligand>
</feature>
<feature type="binding site" evidence="1">
    <location>
        <position position="251"/>
    </location>
    <ligand>
        <name>substrate</name>
    </ligand>
</feature>
<feature type="binding site" evidence="1">
    <location>
        <begin position="256"/>
        <end position="257"/>
    </location>
    <ligand>
        <name>substrate</name>
    </ligand>
</feature>
<proteinExistence type="evidence at protein level"/>
<gene>
    <name evidence="5" type="ordered locus">RHE_CH00452</name>
</gene>
<dbReference type="EC" id="5.1.1.8" evidence="2"/>
<dbReference type="EMBL" id="CP000133">
    <property type="protein sequence ID" value="ABC89273.1"/>
    <property type="molecule type" value="Genomic_DNA"/>
</dbReference>
<dbReference type="RefSeq" id="WP_011423830.1">
    <property type="nucleotide sequence ID" value="NC_007761.1"/>
</dbReference>
<dbReference type="SMR" id="Q2KD13"/>
<dbReference type="KEGG" id="ret:RHE_CH00452"/>
<dbReference type="eggNOG" id="COG3938">
    <property type="taxonomic scope" value="Bacteria"/>
</dbReference>
<dbReference type="HOGENOM" id="CLU_036729_2_0_5"/>
<dbReference type="OrthoDB" id="181267at2"/>
<dbReference type="SABIO-RK" id="Q2KD13"/>
<dbReference type="Proteomes" id="UP000001936">
    <property type="component" value="Chromosome"/>
</dbReference>
<dbReference type="GO" id="GO:0047580">
    <property type="term" value="F:4-hydroxyproline epimerase activity"/>
    <property type="evidence" value="ECO:0007669"/>
    <property type="project" value="UniProtKB-EC"/>
</dbReference>
<dbReference type="GO" id="GO:0050346">
    <property type="term" value="F:trans-L-3-hydroxyproline dehydratase activity"/>
    <property type="evidence" value="ECO:0007669"/>
    <property type="project" value="UniProtKB-ARBA"/>
</dbReference>
<dbReference type="FunFam" id="3.10.310.10:FF:000005">
    <property type="entry name" value="Proline racemase"/>
    <property type="match status" value="1"/>
</dbReference>
<dbReference type="Gene3D" id="3.10.310.10">
    <property type="entry name" value="Diaminopimelate Epimerase, Chain A, domain 1"/>
    <property type="match status" value="2"/>
</dbReference>
<dbReference type="InterPro" id="IPR008794">
    <property type="entry name" value="Pro_racemase_fam"/>
</dbReference>
<dbReference type="PANTHER" id="PTHR33442:SF5">
    <property type="entry name" value="BIFUNCTIONAL TRANS-3-HYDROXY-L-PROLINE DEHYDRATASE_2-EPIMERASE"/>
    <property type="match status" value="1"/>
</dbReference>
<dbReference type="PANTHER" id="PTHR33442">
    <property type="entry name" value="TRANS-3-HYDROXY-L-PROLINE DEHYDRATASE"/>
    <property type="match status" value="1"/>
</dbReference>
<dbReference type="Pfam" id="PF05544">
    <property type="entry name" value="Pro_racemase"/>
    <property type="match status" value="1"/>
</dbReference>
<dbReference type="PIRSF" id="PIRSF029792">
    <property type="entry name" value="Pro_racemase"/>
    <property type="match status" value="1"/>
</dbReference>
<dbReference type="SFLD" id="SFLDS00028">
    <property type="entry name" value="Proline_Racemase"/>
    <property type="match status" value="1"/>
</dbReference>
<dbReference type="SUPFAM" id="SSF54506">
    <property type="entry name" value="Diaminopimelate epimerase-like"/>
    <property type="match status" value="1"/>
</dbReference>
<name>4HYPE_RHIEC</name>
<keyword id="KW-0413">Isomerase</keyword>
<keyword id="KW-1185">Reference proteome</keyword>
<protein>
    <recommendedName>
        <fullName evidence="3">4-hydroxyproline 2-epimerase</fullName>
        <shortName>4Hyp 2-epimerase</shortName>
        <shortName evidence="3">4HypE</shortName>
        <ecNumber evidence="2">5.1.1.8</ecNumber>
    </recommendedName>
</protein>
<comment type="function">
    <text evidence="2">Catalyzes the epimerization of trans-4-hydroxy-L-proline (t4LHyp) to cis-4-hydroxy-D-proline (c4DHyp). May be involved in a degradation pathway of t4LHyp. Can also catalyze the epimerization of trans-3-hydroxy-L-proline (t3LHyp) to cis-3-hydroxy-D-proline (c3DHyp) in vitro, albeit with 2-fold lower efficiency. Displays no proline racemase activity.</text>
</comment>
<comment type="catalytic activity">
    <reaction evidence="2">
        <text>trans-4-hydroxy-L-proline = cis-4-hydroxy-D-proline</text>
        <dbReference type="Rhea" id="RHEA:21152"/>
        <dbReference type="ChEBI" id="CHEBI:57690"/>
        <dbReference type="ChEBI" id="CHEBI:58375"/>
        <dbReference type="EC" id="5.1.1.8"/>
    </reaction>
</comment>
<comment type="biophysicochemical properties">
    <kinetics>
        <KM evidence="2">2.1 mM for trans-4-hydroxy-L-proline</KM>
        <KM evidence="2">2.1 mM for trans-3-hydroxy-L-proline</KM>
        <text evidence="2">kcat is 1.9 sec(-1) for t4LHyp epimerization. kcat is 0.94 sec(-1) for t3LHyp epimerization.</text>
    </kinetics>
</comment>
<comment type="similarity">
    <text evidence="4">Belongs to the proline racemase family.</text>
</comment>